<comment type="function">
    <text evidence="5">May be involved in the ribosome maturation process. Complements an ObgE(CgtA) function in E.coli ribosome maturation. Plays a role of GTPase in vitro. When missing, disorganization of the nucleolar architecture is observed.</text>
</comment>
<comment type="interaction">
    <interactant intactId="EBI-5453796">
        <id>A4D1E9</id>
    </interactant>
    <interactant intactId="EBI-618309">
        <id>Q08379</id>
        <label>GOLGA2</label>
    </interactant>
    <organismsDiffer>false</organismsDiffer>
    <experiments>3</experiments>
</comment>
<comment type="interaction">
    <interactant intactId="EBI-5453796">
        <id>A4D1E9</id>
    </interactant>
    <interactant intactId="EBI-742948">
        <id>Q5JR59</id>
        <label>MTUS2</label>
    </interactant>
    <organismsDiffer>false</organismsDiffer>
    <experiments>3</experiments>
</comment>
<comment type="interaction">
    <interactant intactId="EBI-5453796">
        <id>A4D1E9</id>
    </interactant>
    <interactant intactId="EBI-302345">
        <id>Q8ND90</id>
        <label>PNMA1</label>
    </interactant>
    <organismsDiffer>false</organismsDiffer>
    <experiments>4</experiments>
</comment>
<comment type="subcellular location">
    <subcellularLocation>
        <location evidence="5">Nucleus</location>
        <location evidence="5">Nucleolus</location>
    </subcellularLocation>
    <subcellularLocation>
        <location evidence="5">Chromosome</location>
    </subcellularLocation>
    <text>Found in the dense fibrillar compartment region of the nucleolus. At the onset of mitosis moves to the chromosome surface and remains there until anaphase. Gradually re-assembles into the nucleolus at late anaphase to telophase.</text>
</comment>
<comment type="alternative products">
    <event type="alternative splicing"/>
    <isoform>
        <id>A4D1E9-1</id>
        <name>1</name>
        <sequence type="displayed"/>
    </isoform>
    <isoform>
        <id>A4D1E9-2</id>
        <name>2</name>
        <sequence type="described" ref="VSP_029880"/>
    </isoform>
    <isoform>
        <id>A4D1E9-3</id>
        <name>3</name>
        <sequence type="described" ref="VSP_029881 VSP_029882"/>
    </isoform>
</comment>
<comment type="similarity">
    <text evidence="1">Belongs to the TRAFAC class OBG-HflX-like GTPase superfamily. OBG GTPase family.</text>
</comment>
<protein>
    <recommendedName>
        <fullName>GTP-binding protein 10</fullName>
    </recommendedName>
    <alternativeName>
        <fullName>Protein obg homolog 2</fullName>
        <shortName>ObgH2</shortName>
    </alternativeName>
</protein>
<name>GTPBA_HUMAN</name>
<feature type="chain" id="PRO_0000312630" description="GTP-binding protein 10">
    <location>
        <begin position="1"/>
        <end position="387"/>
    </location>
</feature>
<feature type="domain" description="Obg" evidence="2">
    <location>
        <begin position="13"/>
        <end position="148"/>
    </location>
</feature>
<feature type="domain" description="OBG-type G" evidence="1">
    <location>
        <begin position="149"/>
        <end position="344"/>
    </location>
</feature>
<feature type="binding site" evidence="1">
    <location>
        <begin position="155"/>
        <end position="162"/>
    </location>
    <ligand>
        <name>GTP</name>
        <dbReference type="ChEBI" id="CHEBI:37565"/>
    </ligand>
</feature>
<feature type="binding site" evidence="1">
    <location>
        <begin position="202"/>
        <end position="206"/>
    </location>
    <ligand>
        <name>GTP</name>
        <dbReference type="ChEBI" id="CHEBI:37565"/>
    </ligand>
</feature>
<feature type="binding site" evidence="1">
    <location>
        <begin position="278"/>
        <end position="281"/>
    </location>
    <ligand>
        <name>GTP</name>
        <dbReference type="ChEBI" id="CHEBI:37565"/>
    </ligand>
</feature>
<feature type="splice variant" id="VSP_029880" description="In isoform 2." evidence="8 10">
    <location>
        <begin position="77"/>
        <end position="155"/>
    </location>
</feature>
<feature type="splice variant" id="VSP_029881" description="In isoform 3." evidence="9">
    <original>GELNKENDRI</original>
    <variation>DSQMLENPLC</variation>
    <location>
        <begin position="107"/>
        <end position="116"/>
    </location>
</feature>
<feature type="splice variant" id="VSP_029882" description="In isoform 3." evidence="9">
    <location>
        <begin position="117"/>
        <end position="387"/>
    </location>
</feature>
<feature type="sequence variant" id="VAR_037543" description="In dbSNP:rs42663." evidence="3 4 6">
    <original>C</original>
    <variation>W</variation>
    <location>
        <position position="88"/>
    </location>
</feature>
<feature type="sequence variant" id="VAR_037544" description="In dbSNP:rs42664." evidence="4">
    <original>N</original>
    <variation>S</variation>
    <location>
        <position position="110"/>
    </location>
</feature>
<feature type="sequence variant" id="VAR_037545" description="In dbSNP:rs35001814.">
    <original>L</original>
    <variation>F</variation>
    <location>
        <position position="164"/>
    </location>
</feature>
<feature type="sequence variant" id="VAR_037546" description="In dbSNP:rs17863999." evidence="7">
    <original>M</original>
    <variation>I</variation>
    <location>
        <position position="368"/>
    </location>
</feature>
<feature type="sequence conflict" description="In Ref. 7; AAI07715." evidence="11" ref="7">
    <original>R</original>
    <variation>G</variation>
    <location>
        <position position="64"/>
    </location>
</feature>
<keyword id="KW-0002">3D-structure</keyword>
<keyword id="KW-0025">Alternative splicing</keyword>
<keyword id="KW-0158">Chromosome</keyword>
<keyword id="KW-0342">GTP-binding</keyword>
<keyword id="KW-0547">Nucleotide-binding</keyword>
<keyword id="KW-0539">Nucleus</keyword>
<keyword id="KW-1267">Proteomics identification</keyword>
<keyword id="KW-1185">Reference proteome</keyword>
<keyword id="KW-0690">Ribosome biogenesis</keyword>
<gene>
    <name type="primary">GTPBP10</name>
    <name type="synonym">OBGH2</name>
    <name type="ORF">UG0751c10</name>
</gene>
<evidence type="ECO:0000255" key="1">
    <source>
        <dbReference type="PROSITE-ProRule" id="PRU01047"/>
    </source>
</evidence>
<evidence type="ECO:0000255" key="2">
    <source>
        <dbReference type="PROSITE-ProRule" id="PRU01231"/>
    </source>
</evidence>
<evidence type="ECO:0000269" key="3">
    <source>
    </source>
</evidence>
<evidence type="ECO:0000269" key="4">
    <source>
    </source>
</evidence>
<evidence type="ECO:0000269" key="5">
    <source>
    </source>
</evidence>
<evidence type="ECO:0000269" key="6">
    <source>
    </source>
</evidence>
<evidence type="ECO:0000269" key="7">
    <source ref="1"/>
</evidence>
<evidence type="ECO:0000303" key="8">
    <source>
    </source>
</evidence>
<evidence type="ECO:0000303" key="9">
    <source>
    </source>
</evidence>
<evidence type="ECO:0000303" key="10">
    <source ref="1"/>
</evidence>
<evidence type="ECO:0000305" key="11"/>
<dbReference type="EMBL" id="AF351613">
    <property type="protein sequence ID" value="AAN76513.1"/>
    <property type="molecule type" value="mRNA"/>
</dbReference>
<dbReference type="EMBL" id="AK095561">
    <property type="protein sequence ID" value="BAC04573.1"/>
    <property type="molecule type" value="mRNA"/>
</dbReference>
<dbReference type="EMBL" id="AK294325">
    <property type="protein sequence ID" value="BAG57597.1"/>
    <property type="molecule type" value="mRNA"/>
</dbReference>
<dbReference type="EMBL" id="CR933597">
    <property type="protein sequence ID" value="CAI45922.1"/>
    <property type="molecule type" value="mRNA"/>
</dbReference>
<dbReference type="EMBL" id="AC002064">
    <property type="status" value="NOT_ANNOTATED_CDS"/>
    <property type="molecule type" value="Genomic_DNA"/>
</dbReference>
<dbReference type="EMBL" id="AC006153">
    <property type="protein sequence ID" value="AAD15550.2"/>
    <property type="molecule type" value="Genomic_DNA"/>
</dbReference>
<dbReference type="EMBL" id="CH236949">
    <property type="protein sequence ID" value="EAL24164.1"/>
    <property type="molecule type" value="Genomic_DNA"/>
</dbReference>
<dbReference type="EMBL" id="CH471091">
    <property type="protein sequence ID" value="EAW76880.1"/>
    <property type="molecule type" value="Genomic_DNA"/>
</dbReference>
<dbReference type="EMBL" id="CH471091">
    <property type="protein sequence ID" value="EAW76882.1"/>
    <property type="molecule type" value="Genomic_DNA"/>
</dbReference>
<dbReference type="EMBL" id="BC004923">
    <property type="protein sequence ID" value="AAH04923.3"/>
    <property type="molecule type" value="mRNA"/>
</dbReference>
<dbReference type="EMBL" id="BC021573">
    <property type="protein sequence ID" value="AAH21573.2"/>
    <property type="molecule type" value="mRNA"/>
</dbReference>
<dbReference type="EMBL" id="BC107714">
    <property type="protein sequence ID" value="AAI07715.1"/>
    <property type="molecule type" value="mRNA"/>
</dbReference>
<dbReference type="CCDS" id="CCDS43614.1">
    <molecule id="A4D1E9-2"/>
</dbReference>
<dbReference type="CCDS" id="CCDS5617.1">
    <molecule id="A4D1E9-1"/>
</dbReference>
<dbReference type="RefSeq" id="NP_001036182.1">
    <molecule id="A4D1E9-2"/>
    <property type="nucleotide sequence ID" value="NM_001042717.3"/>
</dbReference>
<dbReference type="RefSeq" id="NP_149098.2">
    <molecule id="A4D1E9-1"/>
    <property type="nucleotide sequence ID" value="NM_033107.4"/>
</dbReference>
<dbReference type="PDB" id="7OI6">
    <property type="method" value="EM"/>
    <property type="resolution" value="5.70 A"/>
    <property type="chains" value="y=1-387"/>
</dbReference>
<dbReference type="PDB" id="8PK0">
    <property type="method" value="EM"/>
    <property type="resolution" value="3.03 A"/>
    <property type="chains" value="t=1-387"/>
</dbReference>
<dbReference type="PDBsum" id="7OI6"/>
<dbReference type="PDBsum" id="8PK0"/>
<dbReference type="EMDB" id="EMD-12919"/>
<dbReference type="EMDB" id="EMD-17719"/>
<dbReference type="SMR" id="A4D1E9"/>
<dbReference type="BioGRID" id="124573">
    <property type="interactions" value="167"/>
</dbReference>
<dbReference type="FunCoup" id="A4D1E9">
    <property type="interactions" value="1751"/>
</dbReference>
<dbReference type="IntAct" id="A4D1E9">
    <property type="interactions" value="71"/>
</dbReference>
<dbReference type="MINT" id="A4D1E9"/>
<dbReference type="STRING" id="9606.ENSP00000222511"/>
<dbReference type="GlyGen" id="A4D1E9">
    <property type="glycosylation" value="1 site, 1 O-linked glycan (1 site)"/>
</dbReference>
<dbReference type="iPTMnet" id="A4D1E9"/>
<dbReference type="PhosphoSitePlus" id="A4D1E9"/>
<dbReference type="BioMuta" id="GTPBP10"/>
<dbReference type="jPOST" id="A4D1E9"/>
<dbReference type="MassIVE" id="A4D1E9"/>
<dbReference type="PaxDb" id="9606-ENSP00000222511"/>
<dbReference type="PeptideAtlas" id="A4D1E9"/>
<dbReference type="ProteomicsDB" id="615">
    <molecule id="A4D1E9-1"/>
</dbReference>
<dbReference type="ProteomicsDB" id="616">
    <molecule id="A4D1E9-2"/>
</dbReference>
<dbReference type="ProteomicsDB" id="617">
    <molecule id="A4D1E9-3"/>
</dbReference>
<dbReference type="Pumba" id="A4D1E9"/>
<dbReference type="Antibodypedia" id="15416">
    <property type="antibodies" value="151 antibodies from 22 providers"/>
</dbReference>
<dbReference type="DNASU" id="85865"/>
<dbReference type="Ensembl" id="ENST00000222511.11">
    <molecule id="A4D1E9-1"/>
    <property type="protein sequence ID" value="ENSP00000222511.7"/>
    <property type="gene ID" value="ENSG00000105793.16"/>
</dbReference>
<dbReference type="Ensembl" id="ENST00000257659.12">
    <molecule id="A4D1E9-2"/>
    <property type="protein sequence ID" value="ENSP00000257659.8"/>
    <property type="gene ID" value="ENSG00000105793.16"/>
</dbReference>
<dbReference type="Ensembl" id="ENST00000380058.7">
    <molecule id="A4D1E9-3"/>
    <property type="protein sequence ID" value="ENSP00000369398.3"/>
    <property type="gene ID" value="ENSG00000105793.16"/>
</dbReference>
<dbReference type="GeneID" id="85865"/>
<dbReference type="KEGG" id="hsa:85865"/>
<dbReference type="MANE-Select" id="ENST00000222511.11">
    <property type="protein sequence ID" value="ENSP00000222511.7"/>
    <property type="RefSeq nucleotide sequence ID" value="NM_033107.4"/>
    <property type="RefSeq protein sequence ID" value="NP_149098.2"/>
</dbReference>
<dbReference type="UCSC" id="uc003ukm.3">
    <molecule id="A4D1E9-1"/>
    <property type="organism name" value="human"/>
</dbReference>
<dbReference type="AGR" id="HGNC:25106"/>
<dbReference type="CTD" id="85865"/>
<dbReference type="DisGeNET" id="85865"/>
<dbReference type="GeneCards" id="GTPBP10"/>
<dbReference type="HGNC" id="HGNC:25106">
    <property type="gene designation" value="GTPBP10"/>
</dbReference>
<dbReference type="HPA" id="ENSG00000105793">
    <property type="expression patterns" value="Low tissue specificity"/>
</dbReference>
<dbReference type="MIM" id="610920">
    <property type="type" value="gene"/>
</dbReference>
<dbReference type="neXtProt" id="NX_A4D1E9"/>
<dbReference type="OpenTargets" id="ENSG00000105793"/>
<dbReference type="PharmGKB" id="PA162390482"/>
<dbReference type="VEuPathDB" id="HostDB:ENSG00000105793"/>
<dbReference type="eggNOG" id="KOG1489">
    <property type="taxonomic scope" value="Eukaryota"/>
</dbReference>
<dbReference type="GeneTree" id="ENSGT00940000155589"/>
<dbReference type="InParanoid" id="A4D1E9"/>
<dbReference type="OMA" id="VFMVDIF"/>
<dbReference type="OrthoDB" id="347018at2759"/>
<dbReference type="PAN-GO" id="A4D1E9">
    <property type="GO annotations" value="3 GO annotations based on evolutionary models"/>
</dbReference>
<dbReference type="PhylomeDB" id="A4D1E9"/>
<dbReference type="TreeFam" id="TF314774"/>
<dbReference type="PathwayCommons" id="A4D1E9"/>
<dbReference type="SignaLink" id="A4D1E9"/>
<dbReference type="BioGRID-ORCS" id="85865">
    <property type="hits" value="134 hits in 1161 CRISPR screens"/>
</dbReference>
<dbReference type="CD-CODE" id="91857CE7">
    <property type="entry name" value="Nucleolus"/>
</dbReference>
<dbReference type="ChiTaRS" id="GTPBP10">
    <property type="organism name" value="human"/>
</dbReference>
<dbReference type="GenomeRNAi" id="85865"/>
<dbReference type="Pharos" id="A4D1E9">
    <property type="development level" value="Tbio"/>
</dbReference>
<dbReference type="PRO" id="PR:A4D1E9"/>
<dbReference type="Proteomes" id="UP000005640">
    <property type="component" value="Chromosome 7"/>
</dbReference>
<dbReference type="RNAct" id="A4D1E9">
    <property type="molecule type" value="protein"/>
</dbReference>
<dbReference type="Bgee" id="ENSG00000105793">
    <property type="expression patterns" value="Expressed in corpus epididymis and 186 other cell types or tissues"/>
</dbReference>
<dbReference type="ExpressionAtlas" id="A4D1E9">
    <property type="expression patterns" value="baseline and differential"/>
</dbReference>
<dbReference type="GO" id="GO:0005694">
    <property type="term" value="C:chromosome"/>
    <property type="evidence" value="ECO:0007669"/>
    <property type="project" value="UniProtKB-SubCell"/>
</dbReference>
<dbReference type="GO" id="GO:0005739">
    <property type="term" value="C:mitochondrion"/>
    <property type="evidence" value="ECO:0006056"/>
    <property type="project" value="FlyBase"/>
</dbReference>
<dbReference type="GO" id="GO:0005730">
    <property type="term" value="C:nucleolus"/>
    <property type="evidence" value="ECO:0007669"/>
    <property type="project" value="UniProtKB-SubCell"/>
</dbReference>
<dbReference type="GO" id="GO:0005525">
    <property type="term" value="F:GTP binding"/>
    <property type="evidence" value="ECO:0000318"/>
    <property type="project" value="GO_Central"/>
</dbReference>
<dbReference type="GO" id="GO:0003924">
    <property type="term" value="F:GTPase activity"/>
    <property type="evidence" value="ECO:0000318"/>
    <property type="project" value="GO_Central"/>
</dbReference>
<dbReference type="GO" id="GO:0000287">
    <property type="term" value="F:magnesium ion binding"/>
    <property type="evidence" value="ECO:0007669"/>
    <property type="project" value="InterPro"/>
</dbReference>
<dbReference type="GO" id="GO:0003723">
    <property type="term" value="F:RNA binding"/>
    <property type="evidence" value="ECO:0007005"/>
    <property type="project" value="UniProtKB"/>
</dbReference>
<dbReference type="GO" id="GO:0042254">
    <property type="term" value="P:ribosome biogenesis"/>
    <property type="evidence" value="ECO:0007669"/>
    <property type="project" value="UniProtKB-KW"/>
</dbReference>
<dbReference type="CDD" id="cd01898">
    <property type="entry name" value="Obg"/>
    <property type="match status" value="1"/>
</dbReference>
<dbReference type="FunFam" id="3.40.50.300:FF:001339">
    <property type="entry name" value="Mitochondrial ribosome-associated GTPase 2"/>
    <property type="match status" value="1"/>
</dbReference>
<dbReference type="FunFam" id="2.70.210.12:FF:000002">
    <property type="entry name" value="Putative gtp-binding protein 10"/>
    <property type="match status" value="1"/>
</dbReference>
<dbReference type="Gene3D" id="2.70.210.12">
    <property type="entry name" value="GTP1/OBG domain"/>
    <property type="match status" value="1"/>
</dbReference>
<dbReference type="Gene3D" id="3.40.50.300">
    <property type="entry name" value="P-loop containing nucleotide triphosphate hydrolases"/>
    <property type="match status" value="1"/>
</dbReference>
<dbReference type="InterPro" id="IPR031167">
    <property type="entry name" value="G_OBG"/>
</dbReference>
<dbReference type="InterPro" id="IPR006073">
    <property type="entry name" value="GTP-bd"/>
</dbReference>
<dbReference type="InterPro" id="IPR014100">
    <property type="entry name" value="GTP-bd_Obg/CgtA"/>
</dbReference>
<dbReference type="InterPro" id="IPR006169">
    <property type="entry name" value="GTP1_OBG_dom"/>
</dbReference>
<dbReference type="InterPro" id="IPR036726">
    <property type="entry name" value="GTP1_OBG_dom_sf"/>
</dbReference>
<dbReference type="InterPro" id="IPR045086">
    <property type="entry name" value="OBG_GTPase"/>
</dbReference>
<dbReference type="InterPro" id="IPR027417">
    <property type="entry name" value="P-loop_NTPase"/>
</dbReference>
<dbReference type="PANTHER" id="PTHR11702">
    <property type="entry name" value="DEVELOPMENTALLY REGULATED GTP-BINDING PROTEIN-RELATED"/>
    <property type="match status" value="1"/>
</dbReference>
<dbReference type="PANTHER" id="PTHR11702:SF43">
    <property type="entry name" value="GTP-BINDING PROTEIN 10"/>
    <property type="match status" value="1"/>
</dbReference>
<dbReference type="Pfam" id="PF01018">
    <property type="entry name" value="GTP1_OBG"/>
    <property type="match status" value="1"/>
</dbReference>
<dbReference type="Pfam" id="PF01926">
    <property type="entry name" value="MMR_HSR1"/>
    <property type="match status" value="1"/>
</dbReference>
<dbReference type="PIRSF" id="PIRSF002401">
    <property type="entry name" value="GTP_bd_Obg/CgtA"/>
    <property type="match status" value="1"/>
</dbReference>
<dbReference type="PRINTS" id="PR00326">
    <property type="entry name" value="GTP1OBG"/>
</dbReference>
<dbReference type="SUPFAM" id="SSF82051">
    <property type="entry name" value="Obg GTP-binding protein N-terminal domain"/>
    <property type="match status" value="1"/>
</dbReference>
<dbReference type="SUPFAM" id="SSF52540">
    <property type="entry name" value="P-loop containing nucleoside triphosphate hydrolases"/>
    <property type="match status" value="1"/>
</dbReference>
<dbReference type="PROSITE" id="PS51710">
    <property type="entry name" value="G_OBG"/>
    <property type="match status" value="1"/>
</dbReference>
<dbReference type="PROSITE" id="PS51883">
    <property type="entry name" value="OBG"/>
    <property type="match status" value="1"/>
</dbReference>
<sequence length="387" mass="42933">MVHCSCVLFRKYGNFIDKLRLFTRGGSGGMGYPRLGGEGGKGGDVWVVAQNRMTLKQLKDRYPRKRFVAGVGANSKISALKGSKGKDCEIPVPVGISVTDENGKIIGELNKENDRILVAQGGLGGKLLTNFLPLKGQKRIIHLDLKLIADVGLVGFPNAGKSSLLSCVSHAKPAIADYAFTTLKPELGKIMYSDFKQISVADLPGLIEGAHMNKGMGHKFLKHIERTRQLLFVVDISGFQLSSHTQYRTAFETIILLTKELELYKEELQTKPALLAVNKMDLPDAQDKFHELMSQLQNPKDFLHLFEKNMIPERTVEFQHIIPISAVTGEGIEELKNCIRKSLDEQANQENDALHKKQLLNLWISDTMSSTEPPSKHAVTTSKMDII</sequence>
<organism>
    <name type="scientific">Homo sapiens</name>
    <name type="common">Human</name>
    <dbReference type="NCBI Taxonomy" id="9606"/>
    <lineage>
        <taxon>Eukaryota</taxon>
        <taxon>Metazoa</taxon>
        <taxon>Chordata</taxon>
        <taxon>Craniata</taxon>
        <taxon>Vertebrata</taxon>
        <taxon>Euteleostomi</taxon>
        <taxon>Mammalia</taxon>
        <taxon>Eutheria</taxon>
        <taxon>Euarchontoglires</taxon>
        <taxon>Primates</taxon>
        <taxon>Haplorrhini</taxon>
        <taxon>Catarrhini</taxon>
        <taxon>Hominidae</taxon>
        <taxon>Homo</taxon>
    </lineage>
</organism>
<accession>A4D1E9</accession>
<accession>B4DFY6</accession>
<accession>Q3B7A6</accession>
<accession>Q5H9V2</accession>
<accession>Q8IXG8</accession>
<accession>Q8N982</accession>
<accession>Q8WU16</accession>
<accession>Q9BSP1</accession>
<accession>Q9Y6T6</accession>
<proteinExistence type="evidence at protein level"/>
<reference key="1">
    <citation type="submission" date="2001-02" db="EMBL/GenBank/DDBJ databases">
        <title>Isolation of full-length cDNA clones from human fetal brain cDNA library.</title>
        <authorList>
            <person name="Mao Y."/>
            <person name="Xie Y."/>
        </authorList>
    </citation>
    <scope>NUCLEOTIDE SEQUENCE [LARGE SCALE MRNA] (ISOFORM 2)</scope>
    <scope>VARIANT ILE-368</scope>
    <source>
        <tissue>Fetal brain</tissue>
    </source>
</reference>
<reference key="2">
    <citation type="journal article" date="2004" name="Nat. Genet.">
        <title>Complete sequencing and characterization of 21,243 full-length human cDNAs.</title>
        <authorList>
            <person name="Ota T."/>
            <person name="Suzuki Y."/>
            <person name="Nishikawa T."/>
            <person name="Otsuki T."/>
            <person name="Sugiyama T."/>
            <person name="Irie R."/>
            <person name="Wakamatsu A."/>
            <person name="Hayashi K."/>
            <person name="Sato H."/>
            <person name="Nagai K."/>
            <person name="Kimura K."/>
            <person name="Makita H."/>
            <person name="Sekine M."/>
            <person name="Obayashi M."/>
            <person name="Nishi T."/>
            <person name="Shibahara T."/>
            <person name="Tanaka T."/>
            <person name="Ishii S."/>
            <person name="Yamamoto J."/>
            <person name="Saito K."/>
            <person name="Kawai Y."/>
            <person name="Isono Y."/>
            <person name="Nakamura Y."/>
            <person name="Nagahari K."/>
            <person name="Murakami K."/>
            <person name="Yasuda T."/>
            <person name="Iwayanagi T."/>
            <person name="Wagatsuma M."/>
            <person name="Shiratori A."/>
            <person name="Sudo H."/>
            <person name="Hosoiri T."/>
            <person name="Kaku Y."/>
            <person name="Kodaira H."/>
            <person name="Kondo H."/>
            <person name="Sugawara M."/>
            <person name="Takahashi M."/>
            <person name="Kanda K."/>
            <person name="Yokoi T."/>
            <person name="Furuya T."/>
            <person name="Kikkawa E."/>
            <person name="Omura Y."/>
            <person name="Abe K."/>
            <person name="Kamihara K."/>
            <person name="Katsuta N."/>
            <person name="Sato K."/>
            <person name="Tanikawa M."/>
            <person name="Yamazaki M."/>
            <person name="Ninomiya K."/>
            <person name="Ishibashi T."/>
            <person name="Yamashita H."/>
            <person name="Murakawa K."/>
            <person name="Fujimori K."/>
            <person name="Tanai H."/>
            <person name="Kimata M."/>
            <person name="Watanabe M."/>
            <person name="Hiraoka S."/>
            <person name="Chiba Y."/>
            <person name="Ishida S."/>
            <person name="Ono Y."/>
            <person name="Takiguchi S."/>
            <person name="Watanabe S."/>
            <person name="Yosida M."/>
            <person name="Hotuta T."/>
            <person name="Kusano J."/>
            <person name="Kanehori K."/>
            <person name="Takahashi-Fujii A."/>
            <person name="Hara H."/>
            <person name="Tanase T.-O."/>
            <person name="Nomura Y."/>
            <person name="Togiya S."/>
            <person name="Komai F."/>
            <person name="Hara R."/>
            <person name="Takeuchi K."/>
            <person name="Arita M."/>
            <person name="Imose N."/>
            <person name="Musashino K."/>
            <person name="Yuuki H."/>
            <person name="Oshima A."/>
            <person name="Sasaki N."/>
            <person name="Aotsuka S."/>
            <person name="Yoshikawa Y."/>
            <person name="Matsunawa H."/>
            <person name="Ichihara T."/>
            <person name="Shiohata N."/>
            <person name="Sano S."/>
            <person name="Moriya S."/>
            <person name="Momiyama H."/>
            <person name="Satoh N."/>
            <person name="Takami S."/>
            <person name="Terashima Y."/>
            <person name="Suzuki O."/>
            <person name="Nakagawa S."/>
            <person name="Senoh A."/>
            <person name="Mizoguchi H."/>
            <person name="Goto Y."/>
            <person name="Shimizu F."/>
            <person name="Wakebe H."/>
            <person name="Hishigaki H."/>
            <person name="Watanabe T."/>
            <person name="Sugiyama A."/>
            <person name="Takemoto M."/>
            <person name="Kawakami B."/>
            <person name="Yamazaki M."/>
            <person name="Watanabe K."/>
            <person name="Kumagai A."/>
            <person name="Itakura S."/>
            <person name="Fukuzumi Y."/>
            <person name="Fujimori Y."/>
            <person name="Komiyama M."/>
            <person name="Tashiro H."/>
            <person name="Tanigami A."/>
            <person name="Fujiwara T."/>
            <person name="Ono T."/>
            <person name="Yamada K."/>
            <person name="Fujii Y."/>
            <person name="Ozaki K."/>
            <person name="Hirao M."/>
            <person name="Ohmori Y."/>
            <person name="Kawabata A."/>
            <person name="Hikiji T."/>
            <person name="Kobatake N."/>
            <person name="Inagaki H."/>
            <person name="Ikema Y."/>
            <person name="Okamoto S."/>
            <person name="Okitani R."/>
            <person name="Kawakami T."/>
            <person name="Noguchi S."/>
            <person name="Itoh T."/>
            <person name="Shigeta K."/>
            <person name="Senba T."/>
            <person name="Matsumura K."/>
            <person name="Nakajima Y."/>
            <person name="Mizuno T."/>
            <person name="Morinaga M."/>
            <person name="Sasaki M."/>
            <person name="Togashi T."/>
            <person name="Oyama M."/>
            <person name="Hata H."/>
            <person name="Watanabe M."/>
            <person name="Komatsu T."/>
            <person name="Mizushima-Sugano J."/>
            <person name="Satoh T."/>
            <person name="Shirai Y."/>
            <person name="Takahashi Y."/>
            <person name="Nakagawa K."/>
            <person name="Okumura K."/>
            <person name="Nagase T."/>
            <person name="Nomura N."/>
            <person name="Kikuchi H."/>
            <person name="Masuho Y."/>
            <person name="Yamashita R."/>
            <person name="Nakai K."/>
            <person name="Yada T."/>
            <person name="Nakamura Y."/>
            <person name="Ohara O."/>
            <person name="Isogai T."/>
            <person name="Sugano S."/>
        </authorList>
    </citation>
    <scope>NUCLEOTIDE SEQUENCE [LARGE SCALE MRNA] (ISOFORMS 1 AND 2)</scope>
    <scope>VARIANT TRP-88</scope>
    <source>
        <tissue>Amygdala</tissue>
        <tissue>Brain</tissue>
    </source>
</reference>
<reference key="3">
    <citation type="journal article" date="2007" name="BMC Genomics">
        <title>The full-ORF clone resource of the German cDNA consortium.</title>
        <authorList>
            <person name="Bechtel S."/>
            <person name="Rosenfelder H."/>
            <person name="Duda A."/>
            <person name="Schmidt C.P."/>
            <person name="Ernst U."/>
            <person name="Wellenreuther R."/>
            <person name="Mehrle A."/>
            <person name="Schuster C."/>
            <person name="Bahr A."/>
            <person name="Bloecker H."/>
            <person name="Heubner D."/>
            <person name="Hoerlein A."/>
            <person name="Michel G."/>
            <person name="Wedler H."/>
            <person name="Koehrer K."/>
            <person name="Ottenwaelder B."/>
            <person name="Poustka A."/>
            <person name="Wiemann S."/>
            <person name="Schupp I."/>
        </authorList>
    </citation>
    <scope>NUCLEOTIDE SEQUENCE [LARGE SCALE MRNA] (ISOFORM 3)</scope>
    <scope>VARIANT TRP-88</scope>
    <source>
        <tissue>Uterus</tissue>
    </source>
</reference>
<reference key="4">
    <citation type="journal article" date="2003" name="Nature">
        <title>The DNA sequence of human chromosome 7.</title>
        <authorList>
            <person name="Hillier L.W."/>
            <person name="Fulton R.S."/>
            <person name="Fulton L.A."/>
            <person name="Graves T.A."/>
            <person name="Pepin K.H."/>
            <person name="Wagner-McPherson C."/>
            <person name="Layman D."/>
            <person name="Maas J."/>
            <person name="Jaeger S."/>
            <person name="Walker R."/>
            <person name="Wylie K."/>
            <person name="Sekhon M."/>
            <person name="Becker M.C."/>
            <person name="O'Laughlin M.D."/>
            <person name="Schaller M.E."/>
            <person name="Fewell G.A."/>
            <person name="Delehaunty K.D."/>
            <person name="Miner T.L."/>
            <person name="Nash W.E."/>
            <person name="Cordes M."/>
            <person name="Du H."/>
            <person name="Sun H."/>
            <person name="Edwards J."/>
            <person name="Bradshaw-Cordum H."/>
            <person name="Ali J."/>
            <person name="Andrews S."/>
            <person name="Isak A."/>
            <person name="Vanbrunt A."/>
            <person name="Nguyen C."/>
            <person name="Du F."/>
            <person name="Lamar B."/>
            <person name="Courtney L."/>
            <person name="Kalicki J."/>
            <person name="Ozersky P."/>
            <person name="Bielicki L."/>
            <person name="Scott K."/>
            <person name="Holmes A."/>
            <person name="Harkins R."/>
            <person name="Harris A."/>
            <person name="Strong C.M."/>
            <person name="Hou S."/>
            <person name="Tomlinson C."/>
            <person name="Dauphin-Kohlberg S."/>
            <person name="Kozlowicz-Reilly A."/>
            <person name="Leonard S."/>
            <person name="Rohlfing T."/>
            <person name="Rock S.M."/>
            <person name="Tin-Wollam A.-M."/>
            <person name="Abbott A."/>
            <person name="Minx P."/>
            <person name="Maupin R."/>
            <person name="Strowmatt C."/>
            <person name="Latreille P."/>
            <person name="Miller N."/>
            <person name="Johnson D."/>
            <person name="Murray J."/>
            <person name="Woessner J.P."/>
            <person name="Wendl M.C."/>
            <person name="Yang S.-P."/>
            <person name="Schultz B.R."/>
            <person name="Wallis J.W."/>
            <person name="Spieth J."/>
            <person name="Bieri T.A."/>
            <person name="Nelson J.O."/>
            <person name="Berkowicz N."/>
            <person name="Wohldmann P.E."/>
            <person name="Cook L.L."/>
            <person name="Hickenbotham M.T."/>
            <person name="Eldred J."/>
            <person name="Williams D."/>
            <person name="Bedell J.A."/>
            <person name="Mardis E.R."/>
            <person name="Clifton S.W."/>
            <person name="Chissoe S.L."/>
            <person name="Marra M.A."/>
            <person name="Raymond C."/>
            <person name="Haugen E."/>
            <person name="Gillett W."/>
            <person name="Zhou Y."/>
            <person name="James R."/>
            <person name="Phelps K."/>
            <person name="Iadanoto S."/>
            <person name="Bubb K."/>
            <person name="Simms E."/>
            <person name="Levy R."/>
            <person name="Clendenning J."/>
            <person name="Kaul R."/>
            <person name="Kent W.J."/>
            <person name="Furey T.S."/>
            <person name="Baertsch R.A."/>
            <person name="Brent M.R."/>
            <person name="Keibler E."/>
            <person name="Flicek P."/>
            <person name="Bork P."/>
            <person name="Suyama M."/>
            <person name="Bailey J.A."/>
            <person name="Portnoy M.E."/>
            <person name="Torrents D."/>
            <person name="Chinwalla A.T."/>
            <person name="Gish W.R."/>
            <person name="Eddy S.R."/>
            <person name="McPherson J.D."/>
            <person name="Olson M.V."/>
            <person name="Eichler E.E."/>
            <person name="Green E.D."/>
            <person name="Waterston R.H."/>
            <person name="Wilson R.K."/>
        </authorList>
    </citation>
    <scope>NUCLEOTIDE SEQUENCE [LARGE SCALE GENOMIC DNA]</scope>
</reference>
<reference key="5">
    <citation type="journal article" date="2003" name="Science">
        <title>Human chromosome 7: DNA sequence and biology.</title>
        <authorList>
            <person name="Scherer S.W."/>
            <person name="Cheung J."/>
            <person name="MacDonald J.R."/>
            <person name="Osborne L.R."/>
            <person name="Nakabayashi K."/>
            <person name="Herbrick J.-A."/>
            <person name="Carson A.R."/>
            <person name="Parker-Katiraee L."/>
            <person name="Skaug J."/>
            <person name="Khaja R."/>
            <person name="Zhang J."/>
            <person name="Hudek A.K."/>
            <person name="Li M."/>
            <person name="Haddad M."/>
            <person name="Duggan G.E."/>
            <person name="Fernandez B.A."/>
            <person name="Kanematsu E."/>
            <person name="Gentles S."/>
            <person name="Christopoulos C.C."/>
            <person name="Choufani S."/>
            <person name="Kwasnicka D."/>
            <person name="Zheng X.H."/>
            <person name="Lai Z."/>
            <person name="Nusskern D.R."/>
            <person name="Zhang Q."/>
            <person name="Gu Z."/>
            <person name="Lu F."/>
            <person name="Zeesman S."/>
            <person name="Nowaczyk M.J."/>
            <person name="Teshima I."/>
            <person name="Chitayat D."/>
            <person name="Shuman C."/>
            <person name="Weksberg R."/>
            <person name="Zackai E.H."/>
            <person name="Grebe T.A."/>
            <person name="Cox S.R."/>
            <person name="Kirkpatrick S.J."/>
            <person name="Rahman N."/>
            <person name="Friedman J.M."/>
            <person name="Heng H.H.Q."/>
            <person name="Pelicci P.G."/>
            <person name="Lo-Coco F."/>
            <person name="Belloni E."/>
            <person name="Shaffer L.G."/>
            <person name="Pober B."/>
            <person name="Morton C.C."/>
            <person name="Gusella J.F."/>
            <person name="Bruns G.A.P."/>
            <person name="Korf B.R."/>
            <person name="Quade B.J."/>
            <person name="Ligon A.H."/>
            <person name="Ferguson H."/>
            <person name="Higgins A.W."/>
            <person name="Leach N.T."/>
            <person name="Herrick S.R."/>
            <person name="Lemyre E."/>
            <person name="Farra C.G."/>
            <person name="Kim H.-G."/>
            <person name="Summers A.M."/>
            <person name="Gripp K.W."/>
            <person name="Roberts W."/>
            <person name="Szatmari P."/>
            <person name="Winsor E.J.T."/>
            <person name="Grzeschik K.-H."/>
            <person name="Teebi A."/>
            <person name="Minassian B.A."/>
            <person name="Kere J."/>
            <person name="Armengol L."/>
            <person name="Pujana M.A."/>
            <person name="Estivill X."/>
            <person name="Wilson M.D."/>
            <person name="Koop B.F."/>
            <person name="Tosi S."/>
            <person name="Moore G.E."/>
            <person name="Boright A.P."/>
            <person name="Zlotorynski E."/>
            <person name="Kerem B."/>
            <person name="Kroisel P.M."/>
            <person name="Petek E."/>
            <person name="Oscier D.G."/>
            <person name="Mould S.J."/>
            <person name="Doehner H."/>
            <person name="Doehner K."/>
            <person name="Rommens J.M."/>
            <person name="Vincent J.B."/>
            <person name="Venter J.C."/>
            <person name="Li P.W."/>
            <person name="Mural R.J."/>
            <person name="Adams M.D."/>
            <person name="Tsui L.-C."/>
        </authorList>
    </citation>
    <scope>NUCLEOTIDE SEQUENCE [LARGE SCALE GENOMIC DNA]</scope>
</reference>
<reference key="6">
    <citation type="submission" date="2004-06" db="EMBL/GenBank/DDBJ databases">
        <authorList>
            <person name="Mural R.J."/>
            <person name="Istrail S."/>
            <person name="Sutton G.G."/>
            <person name="Florea L."/>
            <person name="Halpern A.L."/>
            <person name="Mobarry C.M."/>
            <person name="Lippert R."/>
            <person name="Walenz B."/>
            <person name="Shatkay H."/>
            <person name="Dew I."/>
            <person name="Miller J.R."/>
            <person name="Flanigan M.J."/>
            <person name="Edwards N.J."/>
            <person name="Bolanos R."/>
            <person name="Fasulo D."/>
            <person name="Halldorsson B.V."/>
            <person name="Hannenhalli S."/>
            <person name="Turner R."/>
            <person name="Yooseph S."/>
            <person name="Lu F."/>
            <person name="Nusskern D.R."/>
            <person name="Shue B.C."/>
            <person name="Zheng X.H."/>
            <person name="Zhong F."/>
            <person name="Delcher A.L."/>
            <person name="Huson D.H."/>
            <person name="Kravitz S.A."/>
            <person name="Mouchard L."/>
            <person name="Reinert K."/>
            <person name="Remington K.A."/>
            <person name="Clark A.G."/>
            <person name="Waterman M.S."/>
            <person name="Eichler E.E."/>
            <person name="Adams M.D."/>
            <person name="Hunkapiller M.W."/>
            <person name="Myers E.W."/>
            <person name="Venter J.C."/>
        </authorList>
    </citation>
    <scope>NUCLEOTIDE SEQUENCE [LARGE SCALE GENOMIC DNA]</scope>
</reference>
<reference key="7">
    <citation type="journal article" date="2004" name="Genome Res.">
        <title>The status, quality, and expansion of the NIH full-length cDNA project: the Mammalian Gene Collection (MGC).</title>
        <authorList>
            <consortium name="The MGC Project Team"/>
        </authorList>
    </citation>
    <scope>NUCLEOTIDE SEQUENCE [LARGE SCALE MRNA] (ISOFORM 1)</scope>
    <scope>VARIANTS TRP-88 AND SER-110</scope>
    <source>
        <tissue>Skin</tissue>
        <tissue>Uterus</tissue>
    </source>
</reference>
<reference key="8">
    <citation type="journal article" date="2006" name="Genes Cells">
        <title>Human small G proteins, ObgH1, and ObgH2, participate in the maintenance of mitochondria and nucleolar architectures.</title>
        <authorList>
            <person name="Hirano Y."/>
            <person name="Ohniwa R.L."/>
            <person name="Wada C."/>
            <person name="Yoshimura S.H."/>
            <person name="Takeyasu K."/>
        </authorList>
    </citation>
    <scope>FUNCTION</scope>
    <scope>SUBCELLULAR LOCATION</scope>
</reference>
<reference key="9">
    <citation type="journal article" date="2011" name="BMC Syst. Biol.">
        <title>Initial characterization of the human central proteome.</title>
        <authorList>
            <person name="Burkard T.R."/>
            <person name="Planyavsky M."/>
            <person name="Kaupe I."/>
            <person name="Breitwieser F.P."/>
            <person name="Buerckstuemmer T."/>
            <person name="Bennett K.L."/>
            <person name="Superti-Furga G."/>
            <person name="Colinge J."/>
        </authorList>
    </citation>
    <scope>IDENTIFICATION BY MASS SPECTROMETRY [LARGE SCALE ANALYSIS]</scope>
</reference>
<reference key="10">
    <citation type="journal article" date="2015" name="Proteomics">
        <title>N-terminome analysis of the human mitochondrial proteome.</title>
        <authorList>
            <person name="Vaca Jacome A.S."/>
            <person name="Rabilloud T."/>
            <person name="Schaeffer-Reiss C."/>
            <person name="Rompais M."/>
            <person name="Ayoub D."/>
            <person name="Lane L."/>
            <person name="Bairoch A."/>
            <person name="Van Dorsselaer A."/>
            <person name="Carapito C."/>
        </authorList>
    </citation>
    <scope>IDENTIFICATION BY MASS SPECTROMETRY [LARGE SCALE ANALYSIS]</scope>
</reference>